<feature type="chain" id="PRO_0000123433" description="Myosin heavy chain, skeletal muscle">
    <location>
        <begin position="1" status="less than"/>
        <end position="1084"/>
    </location>
</feature>
<feature type="region of interest" description="Alpha-helical tailpiece (S2)">
    <location>
        <begin position="1" status="less than"/>
        <end position="258" status="greater than"/>
    </location>
</feature>
<feature type="region of interest" description="Disordered" evidence="2">
    <location>
        <begin position="1"/>
        <end position="20"/>
    </location>
</feature>
<feature type="region of interest" description="Rodlike tail (S2 and LMM domains)">
    <location>
        <begin position="259" status="less than"/>
        <end position="1084"/>
    </location>
</feature>
<feature type="region of interest" description="Disordered" evidence="2">
    <location>
        <begin position="270"/>
        <end position="292"/>
    </location>
</feature>
<feature type="region of interest" description="Disordered" evidence="2">
    <location>
        <begin position="298"/>
        <end position="317"/>
    </location>
</feature>
<feature type="coiled-coil region" evidence="1">
    <location>
        <begin position="455"/>
        <end position="1084"/>
    </location>
</feature>
<feature type="compositionally biased region" description="Basic and acidic residues" evidence="2">
    <location>
        <begin position="273"/>
        <end position="292"/>
    </location>
</feature>
<feature type="sequence variant">
    <original>L</original>
    <variation>V</variation>
    <location>
        <position position="405"/>
    </location>
</feature>
<feature type="sequence variant">
    <original>V</original>
    <variation>L</variation>
    <location>
        <position position="408"/>
    </location>
</feature>
<feature type="sequence variant">
    <original>E</original>
    <variation>D</variation>
    <location>
        <position position="421"/>
    </location>
</feature>
<feature type="sequence variant">
    <original>S</original>
    <variation>G</variation>
    <location>
        <position position="423"/>
    </location>
</feature>
<feature type="sequence variant">
    <original>K</original>
    <variation>R</variation>
    <location>
        <position position="426"/>
    </location>
</feature>
<feature type="non-consecutive residues" evidence="3">
    <location>
        <begin position="258"/>
        <end position="259"/>
    </location>
</feature>
<feature type="non-terminal residue">
    <location>
        <position position="1"/>
    </location>
</feature>
<organism>
    <name type="scientific">Oryctolagus cuniculus</name>
    <name type="common">Rabbit</name>
    <dbReference type="NCBI Taxonomy" id="9986"/>
    <lineage>
        <taxon>Eukaryota</taxon>
        <taxon>Metazoa</taxon>
        <taxon>Chordata</taxon>
        <taxon>Craniata</taxon>
        <taxon>Vertebrata</taxon>
        <taxon>Euteleostomi</taxon>
        <taxon>Mammalia</taxon>
        <taxon>Eutheria</taxon>
        <taxon>Euarchontoglires</taxon>
        <taxon>Glires</taxon>
        <taxon>Lagomorpha</taxon>
        <taxon>Leporidae</taxon>
        <taxon>Oryctolagus</taxon>
    </lineage>
</organism>
<comment type="function">
    <text>Muscle contraction.</text>
</comment>
<comment type="subunit">
    <text>Muscle myosin is a hexameric protein that consists of 2 heavy chain subunits (MHC), 2 alkali light chain subunits (MLC) and 2 regulatory light chain subunits (MLC-2).</text>
</comment>
<comment type="subcellular location">
    <subcellularLocation>
        <location>Cytoplasm</location>
        <location>Myofibril</location>
    </subcellularLocation>
    <text>Thick filaments of the myofibrils.</text>
</comment>
<comment type="domain">
    <text>The rodlike tail sequence is highly repetitive, showing cycles of a 28-residue repeat pattern composed of 4 heptapeptides, characteristic for alpha-helical coiled coils.</text>
</comment>
<comment type="domain">
    <text evidence="3">Limited proteolysis of myosin heavy chain produces 1 light meromyosin (LMM) and 1 heavy meromyosin (HMM). HMM can be further cleaved into 2 globular subfragments (S1) and 1 rod-shaped subfragment (S2).</text>
</comment>
<evidence type="ECO:0000255" key="1"/>
<evidence type="ECO:0000256" key="2">
    <source>
        <dbReference type="SAM" id="MobiDB-lite"/>
    </source>
</evidence>
<evidence type="ECO:0000305" key="3"/>
<sequence length="1084" mass="125489">SAETEKEMANMKEEFEKTKESLAKAEAKRKELEEKMVALMQEKNDLQLQVQAEADSLADAEERQDLIKTKIQLEAKIKEVTERAEDEEEINAELTAKKRKLEDECSELKKDIDDLELTLAKVEKEKHATENKVKNLTEEMAGLDETIAKLTKEKKALQEAHQQTLDDLQAEEDKVNTLTKAKTKLEQQVDDLEGSLEQEKKIRMDLERAKRKLEGDLKLAQETSMDIENDKQQLDEKLKKLEFMTNLQSKIEDEQALMTNLQRIEELEEEIEAERASRAKAEKQRSDLSRELEEISERLEEAGGATSAQIEMNKKREAEFEKMRRDLEEATLQHEATAAALRKKHADSVAELGEQIDNLQRVKQKLEKEKSELKMEIDDLAGNMETVSKAKGNLEKMCRTLEDQLSEVKTKEEEHQRLINELSAQKARLHTESGEFSRQLDEKDAMVSQLSRGGQAFTQQIEGLKRQLEEETKAKSALAHALQSSRRDCDLLREQYEEEQEAKAELQRAMSKANSEVSQWRTKCETDAIQRTEELEEAKKKLAQRLQDAEEHVEAVNSKCASLEKTKQRLQNEAEDLMIDVERSNATCARMDKKQRNFDKVLAEWKHKYEETQAELEASQKESRSLSTEVFKVKNAYEESLDHLETLKRENKNLQQEISDLTEQIAESAKHIHELEKVKKQIDQEKSELQAALEEAEGSLEHEEGKILRIQLELNQVKSEIDRKIAEKDEEIDQLKRNHLRVVESMQSTLDAEIRSRNDALRIKKKMEGDLNEMEIQLNHANRQAAEAIKNLRNTQGILKDTQLHLDDAVRGQDDHKEQLAMVERRANLMQAEIEELRASLEQTERSRRVADQDLLDASERVQLLHTQNTSLINTKKKLETDISQIQGEMEDIVQEARNAEEKAKKAITDAAMMAEELKKEQDTSAHLERMKKNMEQTVKDLQQRLDEAEQLALKGGKKQIQKLEARVKELENEVESEQKRNVEAVKGLRKHERRVKELTYQTEEDRKNVLRLQDLVDKLQSKVKAYKRQAEEAEEQSNINLSKFRKLQHELEEAEERADIAESQVNKLRVKSRDVHSKVISEE</sequence>
<proteinExistence type="evidence at protein level"/>
<accession>P02562</accession>
<reference key="1">
    <citation type="journal article" date="1981" name="Biophys. J.">
        <title>The amino acid sequence of A 34,000 dalton fragment from S-2 of myosin.</title>
        <authorList>
            <person name="Capony J.-P."/>
            <person name="Elzinga M."/>
        </authorList>
    </citation>
    <scope>PROTEIN SEQUENCE OF 1-258</scope>
</reference>
<reference key="2">
    <citation type="journal article" date="1985" name="J. Biol. Chem.">
        <title>The amino acid sequence and stability predictions of the hinge region in myosin subfragment 2.</title>
        <authorList>
            <person name="Lu R.C."/>
            <person name="Wong A."/>
        </authorList>
    </citation>
    <scope>PROTEIN SEQUENCE OF 259-428</scope>
</reference>
<reference key="3">
    <citation type="journal article" date="1987" name="Eur. J. Biochem.">
        <title>Characterization of cDNA coding for the complete light meromyosin portion of a rabbit fast skeletal muscle myosin heavy chain.</title>
        <authorList>
            <person name="Maeda K."/>
            <person name="Sczakiel G."/>
            <person name="Wittinghofer A."/>
        </authorList>
    </citation>
    <scope>NUCLEOTIDE SEQUENCE [MRNA] OF 409-1084</scope>
</reference>
<reference key="4">
    <citation type="journal article" date="1991" name="FEBS Lett.">
        <title>Rabbit skeletal muscle myosin. Unfolded carboxyl-terminus and its role in molecular assembly.</title>
        <authorList>
            <person name="Maeda K."/>
            <person name="Rosch A."/>
            <person name="Maeda Y."/>
            <person name="Kalbitzer H.R."/>
            <person name="Wittinghofer A."/>
        </authorList>
    </citation>
    <scope>PROTEIN SEQUENCE OF 1076-1084</scope>
</reference>
<protein>
    <recommendedName>
        <fullName>Myosin heavy chain, skeletal muscle</fullName>
    </recommendedName>
</protein>
<dbReference type="EMBL" id="X05958">
    <property type="protein sequence ID" value="CAA29391.1"/>
    <property type="molecule type" value="mRNA"/>
</dbReference>
<dbReference type="PIR" id="A02985">
    <property type="entry name" value="A02985"/>
</dbReference>
<dbReference type="PIR" id="A05280">
    <property type="entry name" value="A05280"/>
</dbReference>
<dbReference type="PIR" id="S00084">
    <property type="entry name" value="S00084"/>
</dbReference>
<dbReference type="SMR" id="P02562"/>
<dbReference type="IntAct" id="P02562">
    <property type="interactions" value="1"/>
</dbReference>
<dbReference type="MINT" id="P02562"/>
<dbReference type="InParanoid" id="P02562"/>
<dbReference type="Proteomes" id="UP000001811">
    <property type="component" value="Unplaced"/>
</dbReference>
<dbReference type="GO" id="GO:0030016">
    <property type="term" value="C:myofibril"/>
    <property type="evidence" value="ECO:0007669"/>
    <property type="project" value="UniProtKB-SubCell"/>
</dbReference>
<dbReference type="GO" id="GO:0016459">
    <property type="term" value="C:myosin complex"/>
    <property type="evidence" value="ECO:0000314"/>
    <property type="project" value="CAFA"/>
</dbReference>
<dbReference type="GO" id="GO:0032982">
    <property type="term" value="C:myosin filament"/>
    <property type="evidence" value="ECO:0007669"/>
    <property type="project" value="UniProtKB-KW"/>
</dbReference>
<dbReference type="GO" id="GO:0016460">
    <property type="term" value="C:myosin II complex"/>
    <property type="evidence" value="ECO:0007669"/>
    <property type="project" value="TreeGrafter"/>
</dbReference>
<dbReference type="GO" id="GO:0051015">
    <property type="term" value="F:actin filament binding"/>
    <property type="evidence" value="ECO:0000353"/>
    <property type="project" value="CAFA"/>
</dbReference>
<dbReference type="GO" id="GO:0005524">
    <property type="term" value="F:ATP binding"/>
    <property type="evidence" value="ECO:0000314"/>
    <property type="project" value="CAFA"/>
</dbReference>
<dbReference type="GO" id="GO:0000146">
    <property type="term" value="F:microfilament motor activity"/>
    <property type="evidence" value="ECO:0000314"/>
    <property type="project" value="CAFA"/>
</dbReference>
<dbReference type="GO" id="GO:0030048">
    <property type="term" value="P:actin filament-based movement"/>
    <property type="evidence" value="ECO:0000314"/>
    <property type="project" value="CAFA"/>
</dbReference>
<dbReference type="GO" id="GO:0006936">
    <property type="term" value="P:muscle contraction"/>
    <property type="evidence" value="ECO:0007669"/>
    <property type="project" value="TreeGrafter"/>
</dbReference>
<dbReference type="FunFam" id="1.20.5.340:FF:000002">
    <property type="entry name" value="Myosin heavy chain"/>
    <property type="match status" value="1"/>
</dbReference>
<dbReference type="FunFam" id="1.20.5.340:FF:000003">
    <property type="entry name" value="Myosin heavy chain"/>
    <property type="match status" value="1"/>
</dbReference>
<dbReference type="FunFam" id="1.20.5.340:FF:000004">
    <property type="entry name" value="Myosin heavy chain"/>
    <property type="match status" value="1"/>
</dbReference>
<dbReference type="FunFam" id="1.20.5.340:FF:000013">
    <property type="entry name" value="Myosin heavy chain"/>
    <property type="match status" value="1"/>
</dbReference>
<dbReference type="FunFam" id="1.20.5.370:FF:000001">
    <property type="entry name" value="Myosin heavy chain"/>
    <property type="match status" value="1"/>
</dbReference>
<dbReference type="FunFam" id="1.20.5.370:FF:000002">
    <property type="entry name" value="Myosin heavy chain"/>
    <property type="match status" value="1"/>
</dbReference>
<dbReference type="FunFam" id="1.20.5.370:FF:000003">
    <property type="entry name" value="Myosin heavy chain"/>
    <property type="match status" value="1"/>
</dbReference>
<dbReference type="FunFam" id="1.20.5.370:FF:000007">
    <property type="entry name" value="Myosin heavy chain"/>
    <property type="match status" value="1"/>
</dbReference>
<dbReference type="FunFam" id="1.20.5.370:FF:000008">
    <property type="entry name" value="Myosin heavy chain"/>
    <property type="match status" value="1"/>
</dbReference>
<dbReference type="Gene3D" id="1.20.5.340">
    <property type="match status" value="5"/>
</dbReference>
<dbReference type="Gene3D" id="1.20.5.370">
    <property type="match status" value="4"/>
</dbReference>
<dbReference type="Gene3D" id="6.10.250.2420">
    <property type="match status" value="1"/>
</dbReference>
<dbReference type="InterPro" id="IPR002928">
    <property type="entry name" value="Myosin_tail"/>
</dbReference>
<dbReference type="InterPro" id="IPR014751">
    <property type="entry name" value="XRCC4-like_C"/>
</dbReference>
<dbReference type="PANTHER" id="PTHR45615">
    <property type="entry name" value="MYOSIN HEAVY CHAIN, NON-MUSCLE"/>
    <property type="match status" value="1"/>
</dbReference>
<dbReference type="PANTHER" id="PTHR45615:SF79">
    <property type="entry name" value="MYOSIN-4"/>
    <property type="match status" value="1"/>
</dbReference>
<dbReference type="Pfam" id="PF01576">
    <property type="entry name" value="Myosin_tail_1"/>
    <property type="match status" value="1"/>
</dbReference>
<dbReference type="SUPFAM" id="SSF90257">
    <property type="entry name" value="Myosin rod fragments"/>
    <property type="match status" value="4"/>
</dbReference>
<dbReference type="SUPFAM" id="SSF57997">
    <property type="entry name" value="Tropomyosin"/>
    <property type="match status" value="1"/>
</dbReference>
<keyword id="KW-0009">Actin-binding</keyword>
<keyword id="KW-0067">ATP-binding</keyword>
<keyword id="KW-0175">Coiled coil</keyword>
<keyword id="KW-0963">Cytoplasm</keyword>
<keyword id="KW-0903">Direct protein sequencing</keyword>
<keyword id="KW-0505">Motor protein</keyword>
<keyword id="KW-0514">Muscle protein</keyword>
<keyword id="KW-0518">Myosin</keyword>
<keyword id="KW-0547">Nucleotide-binding</keyword>
<keyword id="KW-1185">Reference proteome</keyword>
<keyword id="KW-0787">Thick filament</keyword>
<name>MYSS_RABIT</name>